<proteinExistence type="evidence at protein level"/>
<protein>
    <recommendedName>
        <fullName evidence="6">BPTF-associated chromatin complex component 1</fullName>
    </recommendedName>
    <alternativeName>
        <fullName>BPTF-associated protein of 18 kDa</fullName>
    </alternativeName>
    <alternativeName>
        <fullName>Chromatin complexes subunit BAP18</fullName>
    </alternativeName>
</protein>
<reference key="1">
    <citation type="journal article" date="2005" name="Science">
        <title>The transcriptional landscape of the mammalian genome.</title>
        <authorList>
            <person name="Carninci P."/>
            <person name="Kasukawa T."/>
            <person name="Katayama S."/>
            <person name="Gough J."/>
            <person name="Frith M.C."/>
            <person name="Maeda N."/>
            <person name="Oyama R."/>
            <person name="Ravasi T."/>
            <person name="Lenhard B."/>
            <person name="Wells C."/>
            <person name="Kodzius R."/>
            <person name="Shimokawa K."/>
            <person name="Bajic V.B."/>
            <person name="Brenner S.E."/>
            <person name="Batalov S."/>
            <person name="Forrest A.R."/>
            <person name="Zavolan M."/>
            <person name="Davis M.J."/>
            <person name="Wilming L.G."/>
            <person name="Aidinis V."/>
            <person name="Allen J.E."/>
            <person name="Ambesi-Impiombato A."/>
            <person name="Apweiler R."/>
            <person name="Aturaliya R.N."/>
            <person name="Bailey T.L."/>
            <person name="Bansal M."/>
            <person name="Baxter L."/>
            <person name="Beisel K.W."/>
            <person name="Bersano T."/>
            <person name="Bono H."/>
            <person name="Chalk A.M."/>
            <person name="Chiu K.P."/>
            <person name="Choudhary V."/>
            <person name="Christoffels A."/>
            <person name="Clutterbuck D.R."/>
            <person name="Crowe M.L."/>
            <person name="Dalla E."/>
            <person name="Dalrymple B.P."/>
            <person name="de Bono B."/>
            <person name="Della Gatta G."/>
            <person name="di Bernardo D."/>
            <person name="Down T."/>
            <person name="Engstrom P."/>
            <person name="Fagiolini M."/>
            <person name="Faulkner G."/>
            <person name="Fletcher C.F."/>
            <person name="Fukushima T."/>
            <person name="Furuno M."/>
            <person name="Futaki S."/>
            <person name="Gariboldi M."/>
            <person name="Georgii-Hemming P."/>
            <person name="Gingeras T.R."/>
            <person name="Gojobori T."/>
            <person name="Green R.E."/>
            <person name="Gustincich S."/>
            <person name="Harbers M."/>
            <person name="Hayashi Y."/>
            <person name="Hensch T.K."/>
            <person name="Hirokawa N."/>
            <person name="Hill D."/>
            <person name="Huminiecki L."/>
            <person name="Iacono M."/>
            <person name="Ikeo K."/>
            <person name="Iwama A."/>
            <person name="Ishikawa T."/>
            <person name="Jakt M."/>
            <person name="Kanapin A."/>
            <person name="Katoh M."/>
            <person name="Kawasawa Y."/>
            <person name="Kelso J."/>
            <person name="Kitamura H."/>
            <person name="Kitano H."/>
            <person name="Kollias G."/>
            <person name="Krishnan S.P."/>
            <person name="Kruger A."/>
            <person name="Kummerfeld S.K."/>
            <person name="Kurochkin I.V."/>
            <person name="Lareau L.F."/>
            <person name="Lazarevic D."/>
            <person name="Lipovich L."/>
            <person name="Liu J."/>
            <person name="Liuni S."/>
            <person name="McWilliam S."/>
            <person name="Madan Babu M."/>
            <person name="Madera M."/>
            <person name="Marchionni L."/>
            <person name="Matsuda H."/>
            <person name="Matsuzawa S."/>
            <person name="Miki H."/>
            <person name="Mignone F."/>
            <person name="Miyake S."/>
            <person name="Morris K."/>
            <person name="Mottagui-Tabar S."/>
            <person name="Mulder N."/>
            <person name="Nakano N."/>
            <person name="Nakauchi H."/>
            <person name="Ng P."/>
            <person name="Nilsson R."/>
            <person name="Nishiguchi S."/>
            <person name="Nishikawa S."/>
            <person name="Nori F."/>
            <person name="Ohara O."/>
            <person name="Okazaki Y."/>
            <person name="Orlando V."/>
            <person name="Pang K.C."/>
            <person name="Pavan W.J."/>
            <person name="Pavesi G."/>
            <person name="Pesole G."/>
            <person name="Petrovsky N."/>
            <person name="Piazza S."/>
            <person name="Reed J."/>
            <person name="Reid J.F."/>
            <person name="Ring B.Z."/>
            <person name="Ringwald M."/>
            <person name="Rost B."/>
            <person name="Ruan Y."/>
            <person name="Salzberg S.L."/>
            <person name="Sandelin A."/>
            <person name="Schneider C."/>
            <person name="Schoenbach C."/>
            <person name="Sekiguchi K."/>
            <person name="Semple C.A."/>
            <person name="Seno S."/>
            <person name="Sessa L."/>
            <person name="Sheng Y."/>
            <person name="Shibata Y."/>
            <person name="Shimada H."/>
            <person name="Shimada K."/>
            <person name="Silva D."/>
            <person name="Sinclair B."/>
            <person name="Sperling S."/>
            <person name="Stupka E."/>
            <person name="Sugiura K."/>
            <person name="Sultana R."/>
            <person name="Takenaka Y."/>
            <person name="Taki K."/>
            <person name="Tammoja K."/>
            <person name="Tan S.L."/>
            <person name="Tang S."/>
            <person name="Taylor M.S."/>
            <person name="Tegner J."/>
            <person name="Teichmann S.A."/>
            <person name="Ueda H.R."/>
            <person name="van Nimwegen E."/>
            <person name="Verardo R."/>
            <person name="Wei C.L."/>
            <person name="Yagi K."/>
            <person name="Yamanishi H."/>
            <person name="Zabarovsky E."/>
            <person name="Zhu S."/>
            <person name="Zimmer A."/>
            <person name="Hide W."/>
            <person name="Bult C."/>
            <person name="Grimmond S.M."/>
            <person name="Teasdale R.D."/>
            <person name="Liu E.T."/>
            <person name="Brusic V."/>
            <person name="Quackenbush J."/>
            <person name="Wahlestedt C."/>
            <person name="Mattick J.S."/>
            <person name="Hume D.A."/>
            <person name="Kai C."/>
            <person name="Sasaki D."/>
            <person name="Tomaru Y."/>
            <person name="Fukuda S."/>
            <person name="Kanamori-Katayama M."/>
            <person name="Suzuki M."/>
            <person name="Aoki J."/>
            <person name="Arakawa T."/>
            <person name="Iida J."/>
            <person name="Imamura K."/>
            <person name="Itoh M."/>
            <person name="Kato T."/>
            <person name="Kawaji H."/>
            <person name="Kawagashira N."/>
            <person name="Kawashima T."/>
            <person name="Kojima M."/>
            <person name="Kondo S."/>
            <person name="Konno H."/>
            <person name="Nakano K."/>
            <person name="Ninomiya N."/>
            <person name="Nishio T."/>
            <person name="Okada M."/>
            <person name="Plessy C."/>
            <person name="Shibata K."/>
            <person name="Shiraki T."/>
            <person name="Suzuki S."/>
            <person name="Tagami M."/>
            <person name="Waki K."/>
            <person name="Watahiki A."/>
            <person name="Okamura-Oho Y."/>
            <person name="Suzuki H."/>
            <person name="Kawai J."/>
            <person name="Hayashizaki Y."/>
        </authorList>
    </citation>
    <scope>NUCLEOTIDE SEQUENCE [LARGE SCALE MRNA] (ISOFORMS 1; 2; 3 AND 4)</scope>
    <source>
        <strain>C57BL/6J</strain>
        <tissue>Embryo</tissue>
        <tissue>Embryonic heart</tissue>
        <tissue>Kidney</tissue>
    </source>
</reference>
<reference key="2">
    <citation type="journal article" date="2009" name="PLoS Biol.">
        <title>Lineage-specific biology revealed by a finished genome assembly of the mouse.</title>
        <authorList>
            <person name="Church D.M."/>
            <person name="Goodstadt L."/>
            <person name="Hillier L.W."/>
            <person name="Zody M.C."/>
            <person name="Goldstein S."/>
            <person name="She X."/>
            <person name="Bult C.J."/>
            <person name="Agarwala R."/>
            <person name="Cherry J.L."/>
            <person name="DiCuccio M."/>
            <person name="Hlavina W."/>
            <person name="Kapustin Y."/>
            <person name="Meric P."/>
            <person name="Maglott D."/>
            <person name="Birtle Z."/>
            <person name="Marques A.C."/>
            <person name="Graves T."/>
            <person name="Zhou S."/>
            <person name="Teague B."/>
            <person name="Potamousis K."/>
            <person name="Churas C."/>
            <person name="Place M."/>
            <person name="Herschleb J."/>
            <person name="Runnheim R."/>
            <person name="Forrest D."/>
            <person name="Amos-Landgraf J."/>
            <person name="Schwartz D.C."/>
            <person name="Cheng Z."/>
            <person name="Lindblad-Toh K."/>
            <person name="Eichler E.E."/>
            <person name="Ponting C.P."/>
        </authorList>
    </citation>
    <scope>NUCLEOTIDE SEQUENCE [LARGE SCALE GENOMIC DNA]</scope>
    <source>
        <strain>C57BL/6J</strain>
    </source>
</reference>
<reference key="3">
    <citation type="journal article" date="2004" name="Genome Res.">
        <title>The status, quality, and expansion of the NIH full-length cDNA project: the Mammalian Gene Collection (MGC).</title>
        <authorList>
            <consortium name="The MGC Project Team"/>
        </authorList>
    </citation>
    <scope>NUCLEOTIDE SEQUENCE [LARGE SCALE MRNA] (ISOFORM 2)</scope>
    <source>
        <strain>NMRI</strain>
        <tissue>Mammary gland</tissue>
    </source>
</reference>
<reference key="4">
    <citation type="journal article" date="2009" name="Mol. Cell. Proteomics">
        <title>Large scale localization of protein phosphorylation by use of electron capture dissociation mass spectrometry.</title>
        <authorList>
            <person name="Sweet S.M."/>
            <person name="Bailey C.M."/>
            <person name="Cunningham D.L."/>
            <person name="Heath J.K."/>
            <person name="Cooper H.J."/>
        </authorList>
    </citation>
    <scope>PHOSPHORYLATION [LARGE SCALE ANALYSIS] AT SER-96</scope>
    <scope>IDENTIFICATION BY MASS SPECTROMETRY [LARGE SCALE ANALYSIS]</scope>
    <source>
        <tissue>Embryonic fibroblast</tissue>
    </source>
</reference>
<reference key="5">
    <citation type="journal article" date="2010" name="Cell">
        <title>A tissue-specific atlas of mouse protein phosphorylation and expression.</title>
        <authorList>
            <person name="Huttlin E.L."/>
            <person name="Jedrychowski M.P."/>
            <person name="Elias J.E."/>
            <person name="Goswami T."/>
            <person name="Rad R."/>
            <person name="Beausoleil S.A."/>
            <person name="Villen J."/>
            <person name="Haas W."/>
            <person name="Sowa M.E."/>
            <person name="Gygi S.P."/>
        </authorList>
    </citation>
    <scope>PHOSPHORYLATION [LARGE SCALE ANALYSIS] AT SER-96</scope>
    <scope>IDENTIFICATION BY MASS SPECTROMETRY [LARGE SCALE ANALYSIS]</scope>
    <source>
        <tissue>Brain</tissue>
        <tissue>Kidney</tissue>
        <tissue>Liver</tissue>
        <tissue>Lung</tissue>
        <tissue>Spleen</tissue>
        <tissue>Testis</tissue>
    </source>
</reference>
<name>BAP18_MOUSE</name>
<comment type="function">
    <text evidence="1">Component of chromatin complexes such as the MLL1/MLL and NURF complexes.</text>
</comment>
<comment type="subunit">
    <text evidence="1">Component of some MLL1/MLL complex, at least composed of the core components KMT2A/MLL1, ASH2L, HCFC1/HCF1, WDR5 and RBBP5, as well as the facultative components BACC1, CHD8, E2F6, HSP70, INO80C, KANSL1, LAS1L, MAX, MCRS1, MGA, MYST1/MOF, PELP1, PHF20, PRP31, RING2, RUVB1/TIP49A, RUVB2/TIP49B, SENP3, TAF1, TAF4, TAF6, TAF7, TAF9 and TEX10. Component of the nucleosome-remodeling factor (NURF) complex (By similarity).</text>
</comment>
<comment type="subcellular location">
    <subcellularLocation>
        <location evidence="5">Nucleus</location>
    </subcellularLocation>
</comment>
<comment type="alternative products">
    <event type="alternative splicing"/>
    <isoform>
        <id>Q9DCT6-1</id>
        <name>1</name>
        <sequence type="displayed"/>
    </isoform>
    <isoform>
        <id>Q9DCT6-2</id>
        <name>2</name>
        <sequence type="described" ref="VSP_021893"/>
    </isoform>
    <isoform>
        <id>Q9DCT6-3</id>
        <name>3</name>
        <sequence type="described" ref="VSP_021892"/>
    </isoform>
    <isoform>
        <id>Q9DCT6-4</id>
        <name>4</name>
        <sequence type="described" ref="VSP_021892 VSP_021893"/>
    </isoform>
</comment>
<sequence length="171" mass="17996">MTSASTKVGEIFSAAGAAFTKLGELTMQLHPVSDSSPAGAKWTETEIEMLRAAVKRFGDDLNHISCVIKERTVAQIKTTVKRKVYEDSGIPLPAESPKKGPKKMTSGVLSPPNAPPPSSSSVPEAGVPPIKKQKADVTLSALNDSDANSDLVDVEGLGETPPAKKLNFDQA</sequence>
<dbReference type="EMBL" id="AK002491">
    <property type="protein sequence ID" value="BAB22140.1"/>
    <property type="molecule type" value="mRNA"/>
</dbReference>
<dbReference type="EMBL" id="AK003842">
    <property type="protein sequence ID" value="BAB23031.1"/>
    <property type="molecule type" value="mRNA"/>
</dbReference>
<dbReference type="EMBL" id="AK169173">
    <property type="protein sequence ID" value="BAE40952.1"/>
    <property type="molecule type" value="mRNA"/>
</dbReference>
<dbReference type="EMBL" id="AK170380">
    <property type="protein sequence ID" value="BAE41758.1"/>
    <property type="molecule type" value="mRNA"/>
</dbReference>
<dbReference type="EMBL" id="AL669869">
    <property type="status" value="NOT_ANNOTATED_CDS"/>
    <property type="molecule type" value="Genomic_DNA"/>
</dbReference>
<dbReference type="EMBL" id="BC055357">
    <property type="protein sequence ID" value="AAH55357.1"/>
    <property type="molecule type" value="mRNA"/>
</dbReference>
<dbReference type="CCDS" id="CCDS24940.1">
    <molecule id="Q9DCT6-3"/>
</dbReference>
<dbReference type="CCDS" id="CCDS48832.1">
    <molecule id="Q9DCT6-4"/>
</dbReference>
<dbReference type="CCDS" id="CCDS48833.1">
    <molecule id="Q9DCT6-2"/>
</dbReference>
<dbReference type="CCDS" id="CCDS48835.1">
    <molecule id="Q9DCT6-1"/>
</dbReference>
<dbReference type="RefSeq" id="NP_001171072.1">
    <property type="nucleotide sequence ID" value="NM_001177601.1"/>
</dbReference>
<dbReference type="RefSeq" id="NP_001171074.1">
    <molecule id="Q9DCT6-2"/>
    <property type="nucleotide sequence ID" value="NM_001177603.1"/>
</dbReference>
<dbReference type="RefSeq" id="NP_001171077.1">
    <molecule id="Q9DCT6-4"/>
    <property type="nucleotide sequence ID" value="NM_001177606.1"/>
</dbReference>
<dbReference type="RefSeq" id="NP_001171078.1">
    <property type="nucleotide sequence ID" value="NM_001177607.1"/>
</dbReference>
<dbReference type="RefSeq" id="NP_081033.1">
    <molecule id="Q9DCT6-3"/>
    <property type="nucleotide sequence ID" value="NM_026757.2"/>
</dbReference>
<dbReference type="RefSeq" id="NP_665701.1">
    <molecule id="Q9DCT6-1"/>
    <property type="nucleotide sequence ID" value="NM_145758.1"/>
</dbReference>
<dbReference type="SMR" id="Q9DCT6"/>
<dbReference type="BioGRID" id="222642">
    <property type="interactions" value="3"/>
</dbReference>
<dbReference type="FunCoup" id="Q9DCT6">
    <property type="interactions" value="1745"/>
</dbReference>
<dbReference type="IntAct" id="Q9DCT6">
    <property type="interactions" value="2"/>
</dbReference>
<dbReference type="MINT" id="Q9DCT6"/>
<dbReference type="STRING" id="10090.ENSMUSP00000104216"/>
<dbReference type="iPTMnet" id="Q9DCT6"/>
<dbReference type="PhosphoSitePlus" id="Q9DCT6"/>
<dbReference type="jPOST" id="Q9DCT6"/>
<dbReference type="PaxDb" id="10090-ENSMUSP00000104216"/>
<dbReference type="PeptideAtlas" id="Q9DCT6"/>
<dbReference type="ProteomicsDB" id="277106">
    <molecule id="Q9DCT6-1"/>
</dbReference>
<dbReference type="ProteomicsDB" id="277108">
    <molecule id="Q9DCT6-3"/>
</dbReference>
<dbReference type="Pumba" id="Q9DCT6"/>
<dbReference type="DNASU" id="104457"/>
<dbReference type="Ensembl" id="ENSMUST00000021181.13">
    <molecule id="Q9DCT6-2"/>
    <property type="protein sequence ID" value="ENSMUSP00000021181.7"/>
    <property type="gene ID" value="ENSMUSG00000020831.19"/>
</dbReference>
<dbReference type="Ensembl" id="ENSMUST00000102569.10">
    <molecule id="Q9DCT6-3"/>
    <property type="protein sequence ID" value="ENSMUSP00000099629.4"/>
    <property type="gene ID" value="ENSMUSG00000020831.19"/>
</dbReference>
<dbReference type="Ensembl" id="ENSMUST00000108578.9">
    <molecule id="Q9DCT6-1"/>
    <property type="protein sequence ID" value="ENSMUSP00000104219.3"/>
    <property type="gene ID" value="ENSMUSG00000020831.19"/>
</dbReference>
<dbReference type="Ensembl" id="ENSMUST00000108579.8">
    <molecule id="Q9DCT6-4"/>
    <property type="protein sequence ID" value="ENSMUSP00000104220.2"/>
    <property type="gene ID" value="ENSMUSG00000020831.19"/>
</dbReference>
<dbReference type="GeneID" id="104457"/>
<dbReference type="KEGG" id="mmu:104457"/>
<dbReference type="UCSC" id="uc007jud.2">
    <molecule id="Q9DCT6-2"/>
    <property type="organism name" value="mouse"/>
</dbReference>
<dbReference type="UCSC" id="uc007jue.2">
    <molecule id="Q9DCT6-4"/>
    <property type="organism name" value="mouse"/>
</dbReference>
<dbReference type="UCSC" id="uc007jug.2">
    <molecule id="Q9DCT6-3"/>
    <property type="organism name" value="mouse"/>
</dbReference>
<dbReference type="UCSC" id="uc007juh.2">
    <molecule id="Q9DCT6-1"/>
    <property type="organism name" value="mouse"/>
</dbReference>
<dbReference type="AGR" id="MGI:1915609"/>
<dbReference type="CTD" id="124944"/>
<dbReference type="MGI" id="MGI:1915609">
    <property type="gene designation" value="Bacc1"/>
</dbReference>
<dbReference type="VEuPathDB" id="HostDB:ENSMUSG00000020831"/>
<dbReference type="eggNOG" id="KOG4834">
    <property type="taxonomic scope" value="Eukaryota"/>
</dbReference>
<dbReference type="GeneTree" id="ENSGT00390000014721"/>
<dbReference type="HOGENOM" id="CLU_104449_0_0_1"/>
<dbReference type="InParanoid" id="Q9DCT6"/>
<dbReference type="OrthoDB" id="10021571at2759"/>
<dbReference type="PhylomeDB" id="Q9DCT6"/>
<dbReference type="BioGRID-ORCS" id="104457">
    <property type="hits" value="5 hits in 77 CRISPR screens"/>
</dbReference>
<dbReference type="ChiTaRS" id="0610010K14Rik">
    <property type="organism name" value="mouse"/>
</dbReference>
<dbReference type="PRO" id="PR:Q9DCT6"/>
<dbReference type="Proteomes" id="UP000000589">
    <property type="component" value="Chromosome 11"/>
</dbReference>
<dbReference type="RNAct" id="Q9DCT6">
    <property type="molecule type" value="protein"/>
</dbReference>
<dbReference type="Bgee" id="ENSMUSG00000020831">
    <property type="expression patterns" value="Expressed in embryonic brain and 93 other cell types or tissues"/>
</dbReference>
<dbReference type="ExpressionAtlas" id="Q9DCT6">
    <property type="expression patterns" value="baseline and differential"/>
</dbReference>
<dbReference type="GO" id="GO:0071339">
    <property type="term" value="C:MLL1 complex"/>
    <property type="evidence" value="ECO:0000250"/>
    <property type="project" value="UniProtKB"/>
</dbReference>
<dbReference type="GO" id="GO:0016589">
    <property type="term" value="C:NURF complex"/>
    <property type="evidence" value="ECO:0000250"/>
    <property type="project" value="UniProtKB"/>
</dbReference>
<dbReference type="GO" id="GO:0003677">
    <property type="term" value="F:DNA binding"/>
    <property type="evidence" value="ECO:0007669"/>
    <property type="project" value="UniProtKB-KW"/>
</dbReference>
<dbReference type="GO" id="GO:0006325">
    <property type="term" value="P:chromatin organization"/>
    <property type="evidence" value="ECO:0007669"/>
    <property type="project" value="UniProtKB-KW"/>
</dbReference>
<dbReference type="CDD" id="cd00167">
    <property type="entry name" value="SANT"/>
    <property type="match status" value="1"/>
</dbReference>
<dbReference type="FunFam" id="1.20.58.1880:FF:000003">
    <property type="entry name" value="chromatin complexes subunit BAP18 isoform X1"/>
    <property type="match status" value="1"/>
</dbReference>
<dbReference type="Gene3D" id="1.20.58.1880">
    <property type="match status" value="1"/>
</dbReference>
<dbReference type="InterPro" id="IPR009057">
    <property type="entry name" value="Homeodomain-like_sf"/>
</dbReference>
<dbReference type="InterPro" id="IPR001005">
    <property type="entry name" value="SANT/Myb"/>
</dbReference>
<dbReference type="PANTHER" id="PTHR21397:SF2">
    <property type="entry name" value="CHROMATIN COMPLEXES SUBUNIT BAP18"/>
    <property type="match status" value="1"/>
</dbReference>
<dbReference type="PANTHER" id="PTHR21397">
    <property type="entry name" value="CHROMATIN COMPLEXES SUBUNIT BAP18-RELATED"/>
    <property type="match status" value="1"/>
</dbReference>
<dbReference type="SUPFAM" id="SSF46689">
    <property type="entry name" value="Homeodomain-like"/>
    <property type="match status" value="1"/>
</dbReference>
<keyword id="KW-0025">Alternative splicing</keyword>
<keyword id="KW-0156">Chromatin regulator</keyword>
<keyword id="KW-0238">DNA-binding</keyword>
<keyword id="KW-0539">Nucleus</keyword>
<keyword id="KW-0597">Phosphoprotein</keyword>
<keyword id="KW-1185">Reference proteome</keyword>
<gene>
    <name evidence="6" type="primary">Bacc1</name>
    <name type="synonym">Bap18</name>
</gene>
<evidence type="ECO:0000250" key="1"/>
<evidence type="ECO:0000256" key="2">
    <source>
        <dbReference type="SAM" id="MobiDB-lite"/>
    </source>
</evidence>
<evidence type="ECO:0000303" key="3">
    <source>
    </source>
</evidence>
<evidence type="ECO:0000303" key="4">
    <source>
    </source>
</evidence>
<evidence type="ECO:0000305" key="5"/>
<evidence type="ECO:0000312" key="6">
    <source>
        <dbReference type="MGI" id="MGI:1915609"/>
    </source>
</evidence>
<evidence type="ECO:0007744" key="7">
    <source>
    </source>
</evidence>
<evidence type="ECO:0007744" key="8">
    <source>
    </source>
</evidence>
<feature type="chain" id="PRO_0000264252" description="BPTF-associated chromatin complex component 1">
    <location>
        <begin position="1"/>
        <end position="171"/>
    </location>
</feature>
<feature type="domain" description="SANT">
    <location>
        <begin position="38"/>
        <end position="83"/>
    </location>
</feature>
<feature type="region of interest" description="Disordered" evidence="2">
    <location>
        <begin position="86"/>
        <end position="171"/>
    </location>
</feature>
<feature type="compositionally biased region" description="Low complexity" evidence="2">
    <location>
        <begin position="119"/>
        <end position="129"/>
    </location>
</feature>
<feature type="modified residue" description="Phosphoserine" evidence="7 8">
    <location>
        <position position="96"/>
    </location>
</feature>
<feature type="splice variant" id="VSP_021892" description="In isoform 3 and isoform 4." evidence="4">
    <location>
        <begin position="41"/>
        <end position="74"/>
    </location>
</feature>
<feature type="splice variant" id="VSP_021893" description="In isoform 2 and isoform 4." evidence="3 4">
    <original>VTLSALNDSDANSDLVDVEGLGETPPAKKLNFDQA</original>
    <variation>SLTLDSGLLTTSADAPLLSC</variation>
    <location>
        <begin position="137"/>
        <end position="171"/>
    </location>
</feature>
<accession>Q9DCT6</accession>
<accession>Q3TFE6</accession>
<accession>Q7TMP3</accession>
<accession>Q9D183</accession>
<organism>
    <name type="scientific">Mus musculus</name>
    <name type="common">Mouse</name>
    <dbReference type="NCBI Taxonomy" id="10090"/>
    <lineage>
        <taxon>Eukaryota</taxon>
        <taxon>Metazoa</taxon>
        <taxon>Chordata</taxon>
        <taxon>Craniata</taxon>
        <taxon>Vertebrata</taxon>
        <taxon>Euteleostomi</taxon>
        <taxon>Mammalia</taxon>
        <taxon>Eutheria</taxon>
        <taxon>Euarchontoglires</taxon>
        <taxon>Glires</taxon>
        <taxon>Rodentia</taxon>
        <taxon>Myomorpha</taxon>
        <taxon>Muroidea</taxon>
        <taxon>Muridae</taxon>
        <taxon>Murinae</taxon>
        <taxon>Mus</taxon>
        <taxon>Mus</taxon>
    </lineage>
</organism>